<dbReference type="EC" id="3.4.21.6"/>
<dbReference type="EMBL" id="X00673">
    <property type="protein sequence ID" value="CAA25286.1"/>
    <property type="molecule type" value="mRNA"/>
</dbReference>
<dbReference type="PIR" id="A22867">
    <property type="entry name" value="EXBO"/>
</dbReference>
<dbReference type="RefSeq" id="NP_001073682.1">
    <property type="nucleotide sequence ID" value="NM_001080213.2"/>
</dbReference>
<dbReference type="PDB" id="1APO">
    <property type="method" value="NMR"/>
    <property type="chains" value="A=85-126"/>
</dbReference>
<dbReference type="PDB" id="1CCF">
    <property type="method" value="NMR"/>
    <property type="chains" value="A=85-126"/>
</dbReference>
<dbReference type="PDB" id="1IOD">
    <property type="method" value="X-ray"/>
    <property type="resolution" value="2.30 A"/>
    <property type="chains" value="G=41-84"/>
</dbReference>
<dbReference type="PDB" id="1KIG">
    <property type="method" value="X-ray"/>
    <property type="resolution" value="3.00 A"/>
    <property type="chains" value="H=234-474, L=129-179"/>
</dbReference>
<dbReference type="PDB" id="1WHE">
    <property type="method" value="NMR"/>
    <property type="chains" value="A=41-126"/>
</dbReference>
<dbReference type="PDB" id="1WHF">
    <property type="method" value="NMR"/>
    <property type="chains" value="A=41-126"/>
</dbReference>
<dbReference type="PDBsum" id="1APO"/>
<dbReference type="PDBsum" id="1CCF"/>
<dbReference type="PDBsum" id="1IOD"/>
<dbReference type="PDBsum" id="1KIG"/>
<dbReference type="PDBsum" id="1WHE"/>
<dbReference type="PDBsum" id="1WHF"/>
<dbReference type="BMRB" id="P00743"/>
<dbReference type="SMR" id="P00743"/>
<dbReference type="CORUM" id="P00743"/>
<dbReference type="ELM" id="P00743"/>
<dbReference type="FunCoup" id="P00743">
    <property type="interactions" value="171"/>
</dbReference>
<dbReference type="IntAct" id="P00743">
    <property type="interactions" value="1"/>
</dbReference>
<dbReference type="STRING" id="9913.ENSBTAP00000021789"/>
<dbReference type="BindingDB" id="P00743"/>
<dbReference type="ChEMBL" id="CHEMBL3656"/>
<dbReference type="MEROPS" id="S01.216"/>
<dbReference type="GlyConnect" id="101">
    <property type="glycosylation" value="2 N-Linked glycans (1 site), 9 O-Linked glycans"/>
</dbReference>
<dbReference type="GlyCosmos" id="P00743">
    <property type="glycosylation" value="3 sites, 18 glycans"/>
</dbReference>
<dbReference type="GlyGen" id="P00743">
    <property type="glycosylation" value="4 sites, 4 N-linked glycans (1 site), 14 O-linked glycans (1 site)"/>
</dbReference>
<dbReference type="iPTMnet" id="P00743"/>
<dbReference type="PaxDb" id="9913-ENSBTAP00000021789"/>
<dbReference type="GeneID" id="280787"/>
<dbReference type="KEGG" id="bta:280787"/>
<dbReference type="CTD" id="2159"/>
<dbReference type="eggNOG" id="ENOG502QS4N">
    <property type="taxonomic scope" value="Eukaryota"/>
</dbReference>
<dbReference type="HOGENOM" id="CLU_006842_19_5_1"/>
<dbReference type="InParanoid" id="P00743"/>
<dbReference type="OrthoDB" id="6380398at2759"/>
<dbReference type="TreeFam" id="TF327329"/>
<dbReference type="SABIO-RK" id="P00743"/>
<dbReference type="EvolutionaryTrace" id="P00743"/>
<dbReference type="PRO" id="PR:P00743"/>
<dbReference type="Proteomes" id="UP000009136">
    <property type="component" value="Unplaced"/>
</dbReference>
<dbReference type="GO" id="GO:0005615">
    <property type="term" value="C:extracellular space"/>
    <property type="evidence" value="ECO:0000318"/>
    <property type="project" value="GO_Central"/>
</dbReference>
<dbReference type="GO" id="GO:0005509">
    <property type="term" value="F:calcium ion binding"/>
    <property type="evidence" value="ECO:0007669"/>
    <property type="project" value="InterPro"/>
</dbReference>
<dbReference type="GO" id="GO:0004252">
    <property type="term" value="F:serine-type endopeptidase activity"/>
    <property type="evidence" value="ECO:0000318"/>
    <property type="project" value="GO_Central"/>
</dbReference>
<dbReference type="GO" id="GO:0007596">
    <property type="term" value="P:blood coagulation"/>
    <property type="evidence" value="ECO:0000318"/>
    <property type="project" value="GO_Central"/>
</dbReference>
<dbReference type="GO" id="GO:0006508">
    <property type="term" value="P:proteolysis"/>
    <property type="evidence" value="ECO:0007669"/>
    <property type="project" value="UniProtKB-KW"/>
</dbReference>
<dbReference type="CDD" id="cd00054">
    <property type="entry name" value="EGF_CA"/>
    <property type="match status" value="1"/>
</dbReference>
<dbReference type="CDD" id="cd00190">
    <property type="entry name" value="Tryp_SPc"/>
    <property type="match status" value="1"/>
</dbReference>
<dbReference type="FunFam" id="2.40.10.10:FF:000013">
    <property type="entry name" value="Coagulation factor X"/>
    <property type="match status" value="1"/>
</dbReference>
<dbReference type="FunFam" id="2.10.25.10:FF:000162">
    <property type="entry name" value="Coagulation factor X (Predicted)"/>
    <property type="match status" value="1"/>
</dbReference>
<dbReference type="FunFam" id="4.10.740.10:FF:000001">
    <property type="entry name" value="vitamin K-dependent protein S"/>
    <property type="match status" value="1"/>
</dbReference>
<dbReference type="Gene3D" id="4.10.740.10">
    <property type="entry name" value="Coagulation Factor IX"/>
    <property type="match status" value="1"/>
</dbReference>
<dbReference type="Gene3D" id="2.10.25.10">
    <property type="entry name" value="Laminin"/>
    <property type="match status" value="2"/>
</dbReference>
<dbReference type="Gene3D" id="2.40.10.10">
    <property type="entry name" value="Trypsin-like serine proteases"/>
    <property type="match status" value="2"/>
</dbReference>
<dbReference type="InterPro" id="IPR017857">
    <property type="entry name" value="Coagulation_fac-like_Gla_dom"/>
</dbReference>
<dbReference type="InterPro" id="IPR001881">
    <property type="entry name" value="EGF-like_Ca-bd_dom"/>
</dbReference>
<dbReference type="InterPro" id="IPR000742">
    <property type="entry name" value="EGF-like_dom"/>
</dbReference>
<dbReference type="InterPro" id="IPR000152">
    <property type="entry name" value="EGF-type_Asp/Asn_hydroxyl_site"/>
</dbReference>
<dbReference type="InterPro" id="IPR018097">
    <property type="entry name" value="EGF_Ca-bd_CS"/>
</dbReference>
<dbReference type="InterPro" id="IPR035972">
    <property type="entry name" value="GLA-like_dom_SF"/>
</dbReference>
<dbReference type="InterPro" id="IPR000294">
    <property type="entry name" value="GLA_domain"/>
</dbReference>
<dbReference type="InterPro" id="IPR012224">
    <property type="entry name" value="Pept_S1A_FX"/>
</dbReference>
<dbReference type="InterPro" id="IPR050442">
    <property type="entry name" value="Peptidase_S1_coag_factors"/>
</dbReference>
<dbReference type="InterPro" id="IPR009003">
    <property type="entry name" value="Peptidase_S1_PA"/>
</dbReference>
<dbReference type="InterPro" id="IPR043504">
    <property type="entry name" value="Peptidase_S1_PA_chymotrypsin"/>
</dbReference>
<dbReference type="InterPro" id="IPR001314">
    <property type="entry name" value="Peptidase_S1A"/>
</dbReference>
<dbReference type="InterPro" id="IPR001254">
    <property type="entry name" value="Trypsin_dom"/>
</dbReference>
<dbReference type="InterPro" id="IPR018114">
    <property type="entry name" value="TRYPSIN_HIS"/>
</dbReference>
<dbReference type="InterPro" id="IPR033116">
    <property type="entry name" value="TRYPSIN_SER"/>
</dbReference>
<dbReference type="PANTHER" id="PTHR24278">
    <property type="entry name" value="COAGULATION FACTOR"/>
    <property type="match status" value="1"/>
</dbReference>
<dbReference type="PANTHER" id="PTHR24278:SF28">
    <property type="entry name" value="COAGULATION FACTOR X"/>
    <property type="match status" value="1"/>
</dbReference>
<dbReference type="Pfam" id="PF00008">
    <property type="entry name" value="EGF"/>
    <property type="match status" value="1"/>
</dbReference>
<dbReference type="Pfam" id="PF14670">
    <property type="entry name" value="FXa_inhibition"/>
    <property type="match status" value="1"/>
</dbReference>
<dbReference type="Pfam" id="PF00594">
    <property type="entry name" value="Gla"/>
    <property type="match status" value="1"/>
</dbReference>
<dbReference type="Pfam" id="PF00089">
    <property type="entry name" value="Trypsin"/>
    <property type="match status" value="1"/>
</dbReference>
<dbReference type="PIRSF" id="PIRSF001143">
    <property type="entry name" value="Factor_X"/>
    <property type="match status" value="1"/>
</dbReference>
<dbReference type="PRINTS" id="PR00722">
    <property type="entry name" value="CHYMOTRYPSIN"/>
</dbReference>
<dbReference type="PRINTS" id="PR00001">
    <property type="entry name" value="GLABLOOD"/>
</dbReference>
<dbReference type="SMART" id="SM00181">
    <property type="entry name" value="EGF"/>
    <property type="match status" value="2"/>
</dbReference>
<dbReference type="SMART" id="SM00179">
    <property type="entry name" value="EGF_CA"/>
    <property type="match status" value="1"/>
</dbReference>
<dbReference type="SMART" id="SM00069">
    <property type="entry name" value="GLA"/>
    <property type="match status" value="1"/>
</dbReference>
<dbReference type="SMART" id="SM00020">
    <property type="entry name" value="Tryp_SPc"/>
    <property type="match status" value="1"/>
</dbReference>
<dbReference type="SUPFAM" id="SSF57196">
    <property type="entry name" value="EGF/Laminin"/>
    <property type="match status" value="2"/>
</dbReference>
<dbReference type="SUPFAM" id="SSF57630">
    <property type="entry name" value="GLA-domain"/>
    <property type="match status" value="1"/>
</dbReference>
<dbReference type="SUPFAM" id="SSF50494">
    <property type="entry name" value="Trypsin-like serine proteases"/>
    <property type="match status" value="1"/>
</dbReference>
<dbReference type="PROSITE" id="PS00010">
    <property type="entry name" value="ASX_HYDROXYL"/>
    <property type="match status" value="1"/>
</dbReference>
<dbReference type="PROSITE" id="PS00022">
    <property type="entry name" value="EGF_1"/>
    <property type="match status" value="1"/>
</dbReference>
<dbReference type="PROSITE" id="PS01186">
    <property type="entry name" value="EGF_2"/>
    <property type="match status" value="2"/>
</dbReference>
<dbReference type="PROSITE" id="PS50026">
    <property type="entry name" value="EGF_3"/>
    <property type="match status" value="1"/>
</dbReference>
<dbReference type="PROSITE" id="PS01187">
    <property type="entry name" value="EGF_CA"/>
    <property type="match status" value="1"/>
</dbReference>
<dbReference type="PROSITE" id="PS00011">
    <property type="entry name" value="GLA_1"/>
    <property type="match status" value="1"/>
</dbReference>
<dbReference type="PROSITE" id="PS50998">
    <property type="entry name" value="GLA_2"/>
    <property type="match status" value="1"/>
</dbReference>
<dbReference type="PROSITE" id="PS50240">
    <property type="entry name" value="TRYPSIN_DOM"/>
    <property type="match status" value="1"/>
</dbReference>
<dbReference type="PROSITE" id="PS00134">
    <property type="entry name" value="TRYPSIN_HIS"/>
    <property type="match status" value="1"/>
</dbReference>
<dbReference type="PROSITE" id="PS00135">
    <property type="entry name" value="TRYPSIN_SER"/>
    <property type="match status" value="1"/>
</dbReference>
<protein>
    <recommendedName>
        <fullName>Coagulation factor X</fullName>
        <ecNumber>3.4.21.6</ecNumber>
    </recommendedName>
    <alternativeName>
        <fullName>Stuart factor</fullName>
    </alternativeName>
    <component>
        <recommendedName>
            <fullName>Factor X light chain</fullName>
        </recommendedName>
    </component>
    <component>
        <recommendedName>
            <fullName>Factor X heavy chain</fullName>
        </recommendedName>
    </component>
    <component>
        <recommendedName>
            <fullName>Activated factor Xa heavy chain</fullName>
        </recommendedName>
    </component>
</protein>
<feature type="signal peptide" evidence="3">
    <location>
        <begin position="1"/>
        <end position="23"/>
    </location>
</feature>
<feature type="propeptide" id="PRO_0000027779" evidence="15">
    <location>
        <begin position="24"/>
        <end position="40"/>
    </location>
</feature>
<feature type="chain" id="PRO_0000027780" description="Coagulation factor X">
    <location>
        <begin position="41"/>
        <end position="492"/>
    </location>
</feature>
<feature type="chain" id="PRO_0000027781" description="Factor X light chain">
    <location>
        <begin position="41"/>
        <end position="180"/>
    </location>
</feature>
<feature type="chain" id="PRO_0000027782" description="Factor X heavy chain">
    <location>
        <begin position="183"/>
        <end position="492"/>
    </location>
</feature>
<feature type="propeptide" id="PRO_0000027783" description="Activation peptide">
    <location>
        <begin position="183"/>
        <end position="233"/>
    </location>
</feature>
<feature type="chain" id="PRO_0000027784" description="Activated factor Xa heavy chain">
    <location>
        <begin position="234"/>
        <end position="492"/>
    </location>
</feature>
<feature type="propeptide" id="PRO_0000027785" description="May be removed but is not necessary for activation">
    <location>
        <begin position="476"/>
        <end position="492"/>
    </location>
</feature>
<feature type="domain" description="Gla" evidence="6">
    <location>
        <begin position="41"/>
        <end position="85"/>
    </location>
</feature>
<feature type="domain" description="EGF-like 1; calcium-binding" evidence="4">
    <location>
        <begin position="86"/>
        <end position="122"/>
    </location>
</feature>
<feature type="domain" description="EGF-like 2" evidence="4">
    <location>
        <begin position="125"/>
        <end position="165"/>
    </location>
</feature>
<feature type="domain" description="Peptidase S1" evidence="5">
    <location>
        <begin position="234"/>
        <end position="466"/>
    </location>
</feature>
<feature type="region of interest" description="Disordered" evidence="7">
    <location>
        <begin position="472"/>
        <end position="492"/>
    </location>
</feature>
<feature type="active site" description="Charge relay system" evidence="13">
    <location>
        <position position="275"/>
    </location>
</feature>
<feature type="active site" description="Charge relay system" evidence="13">
    <location>
        <position position="321"/>
    </location>
</feature>
<feature type="active site" description="Charge relay system" evidence="13">
    <location>
        <position position="418"/>
    </location>
</feature>
<feature type="site" description="Cleavage; by coagulation factor IXa and coagulation factor VIIa">
    <location>
        <begin position="233"/>
        <end position="234"/>
    </location>
</feature>
<feature type="modified residue" description="4-carboxyglutamate" evidence="6 15">
    <location>
        <position position="46"/>
    </location>
</feature>
<feature type="modified residue" description="4-carboxyglutamate" evidence="6 15">
    <location>
        <position position="47"/>
    </location>
</feature>
<feature type="modified residue" description="4-carboxyglutamate" evidence="6 15">
    <location>
        <position position="54"/>
    </location>
</feature>
<feature type="modified residue" description="4-carboxyglutamate" evidence="6 15">
    <location>
        <position position="56"/>
    </location>
</feature>
<feature type="modified residue" description="4-carboxyglutamate" evidence="6 15">
    <location>
        <position position="59"/>
    </location>
</feature>
<feature type="modified residue" description="4-carboxyglutamate" evidence="6 15">
    <location>
        <position position="60"/>
    </location>
</feature>
<feature type="modified residue" description="4-carboxyglutamate" evidence="6 15">
    <location>
        <position position="65"/>
    </location>
</feature>
<feature type="modified residue" description="4-carboxyglutamate" evidence="6 15">
    <location>
        <position position="66"/>
    </location>
</feature>
<feature type="modified residue" description="4-carboxyglutamate" evidence="6 15">
    <location>
        <position position="69"/>
    </location>
</feature>
<feature type="modified residue" description="4-carboxyglutamate" evidence="6 15">
    <location>
        <position position="72"/>
    </location>
</feature>
<feature type="modified residue" description="4-carboxyglutamate" evidence="6 15">
    <location>
        <position position="75"/>
    </location>
</feature>
<feature type="modified residue" description="4-carboxyglutamate" evidence="6 15">
    <location>
        <position position="79"/>
    </location>
</feature>
<feature type="modified residue" description="(3R)-3-hydroxyaspartate" evidence="14">
    <location>
        <position position="103"/>
    </location>
</feature>
<feature type="modified residue" description="Sulfotyrosine" evidence="12">
    <location>
        <position position="200"/>
    </location>
</feature>
<feature type="glycosylation site" description="O-linked (GalNAc...) threonine" evidence="16">
    <location>
        <position position="208"/>
    </location>
</feature>
<feature type="glycosylation site" id="CAR_000011" description="N-linked (GlcNAc...) asparagine" evidence="8">
    <location>
        <position position="218"/>
    </location>
</feature>
<feature type="glycosylation site" description="O-linked (GalNAc...) threonine" evidence="8">
    <location>
        <position position="485"/>
    </location>
</feature>
<feature type="disulfide bond" evidence="1">
    <location>
        <begin position="57"/>
        <end position="62"/>
    </location>
</feature>
<feature type="disulfide bond" evidence="8">
    <location>
        <begin position="90"/>
        <end position="101"/>
    </location>
</feature>
<feature type="disulfide bond" evidence="8">
    <location>
        <begin position="95"/>
        <end position="110"/>
    </location>
</feature>
<feature type="disulfide bond" evidence="8">
    <location>
        <begin position="112"/>
        <end position="121"/>
    </location>
</feature>
<feature type="disulfide bond" evidence="1">
    <location>
        <begin position="129"/>
        <end position="140"/>
    </location>
</feature>
<feature type="disulfide bond" evidence="1">
    <location>
        <begin position="136"/>
        <end position="149"/>
    </location>
</feature>
<feature type="disulfide bond" evidence="1">
    <location>
        <begin position="151"/>
        <end position="164"/>
    </location>
</feature>
<feature type="disulfide bond" description="Interchain (between light and heavy chains)" evidence="4 5 6 8">
    <location>
        <begin position="172"/>
        <end position="341"/>
    </location>
</feature>
<feature type="disulfide bond" evidence="8">
    <location>
        <begin position="240"/>
        <end position="245"/>
    </location>
</feature>
<feature type="disulfide bond" evidence="8">
    <location>
        <begin position="260"/>
        <end position="276"/>
    </location>
</feature>
<feature type="disulfide bond" evidence="8">
    <location>
        <begin position="389"/>
        <end position="403"/>
    </location>
</feature>
<feature type="disulfide bond" evidence="8">
    <location>
        <begin position="414"/>
        <end position="442"/>
    </location>
</feature>
<feature type="sequence conflict" description="In Ref. 2; AA sequence." evidence="17" ref="2">
    <original>D</original>
    <variation>N</variation>
    <location>
        <position position="103"/>
    </location>
</feature>
<feature type="sequence conflict" description="In Ref. 4; AA sequence." evidence="17" ref="4">
    <location>
        <position position="293"/>
    </location>
</feature>
<feature type="sequence conflict" description="In Ref. 4; AA sequence." evidence="17" ref="4">
    <original>EGN</original>
    <variation>GDE</variation>
    <location>
        <begin position="296"/>
        <end position="298"/>
    </location>
</feature>
<feature type="sequence conflict" description="In Ref. 4; AA sequence." evidence="17" ref="4">
    <location>
        <position position="335"/>
    </location>
</feature>
<feature type="sequence conflict" description="In Ref. 4; AA sequence." evidence="17" ref="4">
    <original>EA</original>
    <variation>AE</variation>
    <location>
        <begin position="349"/>
        <end position="350"/>
    </location>
</feature>
<feature type="sequence conflict" description="In Ref. 4; AA sequence." evidence="17" ref="4">
    <location>
        <position position="355"/>
    </location>
</feature>
<feature type="sequence conflict" description="In Ref. 4; AA sequence." evidence="17" ref="4">
    <original>CARK</original>
    <variation>GKFG</variation>
    <location>
        <begin position="442"/>
        <end position="445"/>
    </location>
</feature>
<feature type="helix" evidence="20">
    <location>
        <begin position="46"/>
        <end position="48"/>
    </location>
</feature>
<feature type="helix" evidence="20">
    <location>
        <begin position="53"/>
        <end position="57"/>
    </location>
</feature>
<feature type="strand" evidence="22">
    <location>
        <begin position="58"/>
        <end position="61"/>
    </location>
</feature>
<feature type="helix" evidence="20">
    <location>
        <begin position="64"/>
        <end position="71"/>
    </location>
</feature>
<feature type="helix" evidence="20">
    <location>
        <begin position="74"/>
        <end position="82"/>
    </location>
</feature>
<feature type="turn" evidence="22">
    <location>
        <begin position="86"/>
        <end position="90"/>
    </location>
</feature>
<feature type="strand" evidence="19">
    <location>
        <begin position="100"/>
        <end position="102"/>
    </location>
</feature>
<feature type="strand" evidence="18">
    <location>
        <begin position="105"/>
        <end position="107"/>
    </location>
</feature>
<feature type="strand" evidence="19">
    <location>
        <begin position="109"/>
        <end position="111"/>
    </location>
</feature>
<feature type="strand" evidence="18">
    <location>
        <begin position="116"/>
        <end position="118"/>
    </location>
</feature>
<feature type="strand" evidence="23">
    <location>
        <begin position="121"/>
        <end position="123"/>
    </location>
</feature>
<feature type="turn" evidence="21">
    <location>
        <begin position="131"/>
        <end position="134"/>
    </location>
</feature>
<feature type="strand" evidence="21">
    <location>
        <begin position="135"/>
        <end position="138"/>
    </location>
</feature>
<feature type="strand" evidence="21">
    <location>
        <begin position="155"/>
        <end position="157"/>
    </location>
</feature>
<feature type="strand" evidence="21">
    <location>
        <begin position="164"/>
        <end position="166"/>
    </location>
</feature>
<feature type="strand" evidence="21">
    <location>
        <begin position="168"/>
        <end position="170"/>
    </location>
</feature>
<feature type="strand" evidence="21">
    <location>
        <begin position="235"/>
        <end position="237"/>
    </location>
</feature>
<feature type="turn" evidence="21">
    <location>
        <begin position="242"/>
        <end position="244"/>
    </location>
</feature>
<feature type="strand" evidence="21">
    <location>
        <begin position="248"/>
        <end position="252"/>
    </location>
</feature>
<feature type="strand" evidence="21">
    <location>
        <begin position="254"/>
        <end position="256"/>
    </location>
</feature>
<feature type="strand" evidence="21">
    <location>
        <begin position="258"/>
        <end position="264"/>
    </location>
</feature>
<feature type="strand" evidence="21">
    <location>
        <begin position="266"/>
        <end position="272"/>
    </location>
</feature>
<feature type="strand" evidence="21">
    <location>
        <begin position="304"/>
        <end position="309"/>
    </location>
</feature>
<feature type="turn" evidence="21">
    <location>
        <begin position="315"/>
        <end position="317"/>
    </location>
</feature>
<feature type="strand" evidence="21">
    <location>
        <begin position="323"/>
        <end position="329"/>
    </location>
</feature>
<feature type="helix" evidence="21">
    <location>
        <begin position="345"/>
        <end position="350"/>
    </location>
</feature>
<feature type="turn" evidence="21">
    <location>
        <begin position="351"/>
        <end position="354"/>
    </location>
</feature>
<feature type="strand" evidence="21">
    <location>
        <begin position="355"/>
        <end position="363"/>
    </location>
</feature>
<feature type="strand" evidence="21">
    <location>
        <begin position="365"/>
        <end position="367"/>
    </location>
</feature>
<feature type="strand" evidence="21">
    <location>
        <begin position="370"/>
        <end position="372"/>
    </location>
</feature>
<feature type="strand" evidence="21">
    <location>
        <begin position="377"/>
        <end position="383"/>
    </location>
</feature>
<feature type="helix" evidence="21">
    <location>
        <begin position="386"/>
        <end position="392"/>
    </location>
</feature>
<feature type="strand" evidence="21">
    <location>
        <begin position="401"/>
        <end position="407"/>
    </location>
</feature>
<feature type="strand" evidence="21">
    <location>
        <begin position="421"/>
        <end position="426"/>
    </location>
</feature>
<feature type="strand" evidence="21">
    <location>
        <begin position="429"/>
        <end position="443"/>
    </location>
</feature>
<feature type="strand" evidence="21">
    <location>
        <begin position="447"/>
        <end position="454"/>
    </location>
</feature>
<feature type="helix" evidence="21">
    <location>
        <begin position="455"/>
        <end position="457"/>
    </location>
</feature>
<feature type="helix" evidence="21">
    <location>
        <begin position="458"/>
        <end position="464"/>
    </location>
</feature>
<proteinExistence type="evidence at protein level"/>
<comment type="function">
    <text evidence="2">Factor Xa is a vitamin K-dependent glycoprotein that converts prothrombin to thrombin in the presence of factor Va, calcium and phospholipid during blood clotting (By similarity). Factor Xa activates pro-inflammatory and pro-fibrotic signaling pathways in a protease-activated receptor (PAR)-dependent manner (By similarity).</text>
</comment>
<comment type="catalytic activity">
    <reaction>
        <text>Selective cleavage of Arg-|-Thr and then Arg-|-Ile bonds in prothrombin to form thrombin.</text>
        <dbReference type="EC" id="3.4.21.6"/>
    </reaction>
</comment>
<comment type="activity regulation">
    <text evidence="1">Inhibited by SERPINA5.</text>
</comment>
<comment type="subunit">
    <text evidence="1 10 11">The two chains are formed from a single-chain precursor by the excision of two Arg residues and are held together by 1 or more disulfide bonds. Forms a heterodimer with SERPINA5 (By similarity). Interacts (activated) with guianensin, an anticoagulant protein from Simulium guianense saliva (PubMed:37469515). Interacts (activated) with simukunin, an anticoagulant protein from Simulium vittatum saliva (PubMed:22383955).</text>
</comment>
<comment type="subcellular location">
    <subcellularLocation>
        <location>Secreted</location>
    </subcellularLocation>
</comment>
<comment type="PTM">
    <text>The vitamin K-dependent, enzymatic carboxylation of some glutamate residues allows the modified protein to bind calcium.</text>
</comment>
<comment type="PTM">
    <text evidence="8 16">N- and O-glycosylated.</text>
</comment>
<comment type="PTM">
    <text evidence="2 9">Proteolytically cleaved and activated by cathepsin CTSG (By similarity). The activation peptide is cleaved by factor IXa (in the intrinsic pathway), or by factor VIIa (in the extrinsic pathway) (PubMed:1059122).</text>
</comment>
<comment type="PTM">
    <text evidence="14">The iron and 2-oxoglutarate dependent 3-hydroxylation of aspartate and asparagine is (R) stereospecific within EGF domains.</text>
</comment>
<comment type="miscellaneous">
    <text>Calcium also binds, with stronger affinity to another site, beyond the GLA domain.</text>
</comment>
<comment type="similarity">
    <text evidence="5">Belongs to the peptidase S1 family.</text>
</comment>
<accession>P00743</accession>
<name>FA10_BOVIN</name>
<gene>
    <name type="primary">F10</name>
</gene>
<evidence type="ECO:0000250" key="1"/>
<evidence type="ECO:0000250" key="2">
    <source>
        <dbReference type="UniProtKB" id="P00742"/>
    </source>
</evidence>
<evidence type="ECO:0000255" key="3"/>
<evidence type="ECO:0000255" key="4">
    <source>
        <dbReference type="PROSITE-ProRule" id="PRU00076"/>
    </source>
</evidence>
<evidence type="ECO:0000255" key="5">
    <source>
        <dbReference type="PROSITE-ProRule" id="PRU00274"/>
    </source>
</evidence>
<evidence type="ECO:0000255" key="6">
    <source>
        <dbReference type="PROSITE-ProRule" id="PRU00463"/>
    </source>
</evidence>
<evidence type="ECO:0000256" key="7">
    <source>
        <dbReference type="SAM" id="MobiDB-lite"/>
    </source>
</evidence>
<evidence type="ECO:0000269" key="8">
    <source>
    </source>
</evidence>
<evidence type="ECO:0000269" key="9">
    <source>
    </source>
</evidence>
<evidence type="ECO:0000269" key="10">
    <source>
    </source>
</evidence>
<evidence type="ECO:0000269" key="11">
    <source>
    </source>
</evidence>
<evidence type="ECO:0000269" key="12">
    <source>
    </source>
</evidence>
<evidence type="ECO:0000269" key="13">
    <source>
    </source>
</evidence>
<evidence type="ECO:0000269" key="14">
    <source>
    </source>
</evidence>
<evidence type="ECO:0000269" key="15">
    <source>
    </source>
</evidence>
<evidence type="ECO:0000269" key="16">
    <source>
    </source>
</evidence>
<evidence type="ECO:0000305" key="17"/>
<evidence type="ECO:0007829" key="18">
    <source>
        <dbReference type="PDB" id="1APO"/>
    </source>
</evidence>
<evidence type="ECO:0007829" key="19">
    <source>
        <dbReference type="PDB" id="1CCF"/>
    </source>
</evidence>
<evidence type="ECO:0007829" key="20">
    <source>
        <dbReference type="PDB" id="1IOD"/>
    </source>
</evidence>
<evidence type="ECO:0007829" key="21">
    <source>
        <dbReference type="PDB" id="1KIG"/>
    </source>
</evidence>
<evidence type="ECO:0007829" key="22">
    <source>
        <dbReference type="PDB" id="1WHE"/>
    </source>
</evidence>
<evidence type="ECO:0007829" key="23">
    <source>
        <dbReference type="PDB" id="1WHF"/>
    </source>
</evidence>
<sequence length="492" mass="54510">MAGLLHLVLLSTALGGLLRPAGSVFLPRDQAHRVLQRARRANSFLEEVKQGNLERECLEEACSLEEAREVFEDAEQTDEFWSKYKDGDQCEGHPCLNQGHCKDGIGDYTCTCAEGFEGKNCEFSTREICSLDNGGCDQFCREERSEVRCSCAHGYVLGDDSKSCVSTERFPCGKFTQGRSRRWAIHTSEDALDASELEHYDPADLSPTESSLDLLGLNRTEPSAGEDGSQVVRIVGGRDCAEGECPWQALLVNEENEGFCGGTILNEFYVLTAAHCLHQAKRFTVRVGDRNTEQEEGNEMAHEVEMTVKHSRFVKETYDFDIAVLRLKTPIRFRRNVAPACLPEKDWAEATLMTQKTGIVSGFGRTHEKGRLSSTLKMLEVPYVDRSTCKLSSSFTITPNMFCAGYDTQPEDACQGDSGGPHVTRFKDTYFVTGIVSWGEGCARKGKFGVYTKVSNFLKWIDKIMKARAGAAGSRGHSEAPATWTVPPPLPL</sequence>
<organism>
    <name type="scientific">Bos taurus</name>
    <name type="common">Bovine</name>
    <dbReference type="NCBI Taxonomy" id="9913"/>
    <lineage>
        <taxon>Eukaryota</taxon>
        <taxon>Metazoa</taxon>
        <taxon>Chordata</taxon>
        <taxon>Craniata</taxon>
        <taxon>Vertebrata</taxon>
        <taxon>Euteleostomi</taxon>
        <taxon>Mammalia</taxon>
        <taxon>Eutheria</taxon>
        <taxon>Laurasiatheria</taxon>
        <taxon>Artiodactyla</taxon>
        <taxon>Ruminantia</taxon>
        <taxon>Pecora</taxon>
        <taxon>Bovidae</taxon>
        <taxon>Bovinae</taxon>
        <taxon>Bos</taxon>
    </lineage>
</organism>
<reference key="1">
    <citation type="journal article" date="1984" name="Nucleic Acids Res.">
        <title>Blood coagulation factor X mRNA encodes a single polypeptide chain containing a prepro leader sequence.</title>
        <authorList>
            <person name="Fung M.R."/>
            <person name="Campbell R.M."/>
            <person name="McGillivray R.T.A."/>
        </authorList>
    </citation>
    <scope>NUCLEOTIDE SEQUENCE [MRNA] OF 1-487</scope>
</reference>
<reference key="2">
    <citation type="journal article" date="1980" name="Biochemistry">
        <title>Amino acid sequence of the light chain of bovine factor X1 (Stuart factor).</title>
        <authorList>
            <person name="Enfield D.L."/>
            <person name="Ericsson L.H."/>
            <person name="Fujikawa K."/>
            <person name="Walsh K.A."/>
            <person name="Neurath H."/>
            <person name="Titani K."/>
        </authorList>
    </citation>
    <scope>PROTEIN SEQUENCE OF 41-180</scope>
    <scope>GAMMA-CARBOXYGLUTAMATION AT GLU-46; GLU-47; GLU-54; GLU-56; GLU-59; GLU-60; GLU-65; GLU-66; GLU-69; GLU-72; GLU-75 AND GLU-79</scope>
</reference>
<reference key="3">
    <citation type="journal article" date="1983" name="Biochem. Biophys. Res. Commun.">
        <title>The occurrence of beta-hydroxyaspartic acid in the vitamin K-dependent blood coagulation zymogens.</title>
        <authorList>
            <person name="McMullen B.A."/>
            <person name="Fujikawa K."/>
            <person name="Kisiel W."/>
        </authorList>
    </citation>
    <scope>HYDROXYLATION AT ASP-103</scope>
</reference>
<reference key="4">
    <citation type="journal article" date="1975" name="Proc. Natl. Acad. Sci. U.S.A.">
        <title>Bovine factor X1 (Stuart factor): amino-acid sequence of heavey chain.</title>
        <authorList>
            <person name="Titani K."/>
            <person name="Fujikawa K."/>
            <person name="Enfield D.L."/>
            <person name="Ericsson L.H."/>
            <person name="Walsh K.A."/>
            <person name="Neurath H."/>
        </authorList>
    </citation>
    <scope>PROTEIN SEQUENCE OF 183-492</scope>
    <scope>GLYCOSYLATION AT ASN-218 AND THR-485</scope>
    <scope>DISULFIDE BONDS</scope>
</reference>
<reference key="5">
    <citation type="journal article" date="1993" name="Eur. J. Biochem.">
        <title>Identification of O-linked oligosaccharide chains in the activation peptides of blood coagulation factor X. The role of the carbohydrate moieties in the activation of factor X.</title>
        <authorList>
            <person name="Inoue K."/>
            <person name="Morita T."/>
        </authorList>
    </citation>
    <scope>PROTEIN SEQUENCE OF 183-233</scope>
    <scope>GLYCOSYLATION AT THR-208</scope>
</reference>
<reference key="6">
    <citation type="journal article" date="1972" name="Biochemistry">
        <title>Bovine factor X 1a (activated Stuart factor). Evidence of homology with mammalian serine proteases.</title>
        <authorList>
            <person name="Titani K."/>
            <person name="Hermodson M.A."/>
            <person name="Fujikawa K."/>
            <person name="Ericsson L.H."/>
            <person name="Walsh K.A."/>
            <person name="Neurath H."/>
            <person name="Davie E.W."/>
        </authorList>
    </citation>
    <scope>ACTIVE SITE</scope>
</reference>
<reference key="7">
    <citation type="journal article" date="1975" name="Proc. Natl. Acad. Sci. U.S.A.">
        <title>Activation of bovine factor X (Stuart factor): conversion of factor Xa-alpha to factor Xa-beta.</title>
        <authorList>
            <person name="Fujikawa K."/>
            <person name="Titani K."/>
            <person name="Davie E.W."/>
        </authorList>
    </citation>
    <scope>PROTEOLYTIC PROCESSING</scope>
</reference>
<reference key="8">
    <citation type="journal article" date="1984" name="J. Biol. Chem.">
        <title>Calcium-binding properties of bovine factor X lacking the gamma-carboxyglutamic acid-containing region.</title>
        <authorList>
            <person name="Sugo T."/>
            <person name="Bjoerk I."/>
            <person name="Holmgren A."/>
            <person name="Stenflo J."/>
        </authorList>
    </citation>
    <scope>CALCIUM-BINDING</scope>
</reference>
<reference key="9">
    <citation type="journal article" date="1986" name="J. Biol. Chem.">
        <title>Localization of the structural difference between bovine blood coagulation factors X1 and X2 to tyrosine 18 in the activation peptide.</title>
        <authorList>
            <person name="Morita T."/>
            <person name="Jackson C.M."/>
        </authorList>
    </citation>
    <scope>SULFATION AT TYR-200</scope>
</reference>
<reference evidence="17" key="10">
    <citation type="journal article" date="2012" name="PLoS ONE">
        <title>Simukunin from the salivary glands of the black fly Simulium vittatum inhibits enzymes that regulate clotting and inflammatory responses.</title>
        <authorList>
            <person name="Tsujimoto H."/>
            <person name="Kotsyfakis M."/>
            <person name="Francischetti I.M."/>
            <person name="Eum J.H."/>
            <person name="Strand M.R."/>
            <person name="Champagne D.E."/>
        </authorList>
    </citation>
    <scope>INTERACTION WITH BLACK FLY SIMUKUNIN</scope>
</reference>
<reference evidence="17" key="11">
    <citation type="journal article" date="2023" name="Front. Immunol.">
        <title>Guianensin, a Simulium guianense salivary protein, has broad anti-hemostatic and anti-inflammatory properties.</title>
        <authorList>
            <person name="Valenzuela-Leon P.C."/>
            <person name="Campos Chagas A."/>
            <person name="Martin-Martin I."/>
            <person name="Williams A.E."/>
            <person name="Berger M."/>
            <person name="Shrivastava G."/>
            <person name="Paige A.S."/>
            <person name="Kotsyfakis M."/>
            <person name="Tirloni L."/>
            <person name="Calvo E."/>
        </authorList>
    </citation>
    <scope>INTERACTION WITH BLACK FLY GUIANENSIN</scope>
</reference>
<reference key="12">
    <citation type="journal article" date="1990" name="Biochemistry">
        <title>1H NMR assignment and secondary structure of the Ca2(+)-free form of the amino-terminal epidermal growth factor like domain in coagulation factor X.</title>
        <authorList>
            <person name="Selander M."/>
            <person name="Persson E."/>
            <person name="Stenflo J."/>
            <person name="Drakenberg T."/>
        </authorList>
    </citation>
    <scope>STRUCTURE BY NMR OF 85-126</scope>
</reference>
<reference key="13">
    <citation type="journal article" date="1992" name="Biochemistry">
        <title>Three-dimensional structure of the apo form of the N-terminal EGF-like module of blood coagulation factor X as determined by NMR spectroscopy and simulated folding.</title>
        <authorList>
            <person name="Ullner M."/>
            <person name="Selander M."/>
            <person name="Persson E."/>
            <person name="Stenflo J."/>
            <person name="Drakenberg T."/>
            <person name="Teleman O."/>
        </authorList>
    </citation>
    <scope>STRUCTURE BY NMR OF 85-126</scope>
</reference>
<reference key="14">
    <citation type="journal article" date="1992" name="J. Biol. Chem.">
        <title>How an epidermal growth factor (EGF)-like domain binds calcium. High resolution NMR structure of the calcium form of the NH2-terminal EGF-like domain in coagulation factor X.</title>
        <authorList>
            <person name="Selander-Sunnerhagen M."/>
            <person name="Ullner M."/>
            <person name="Persson E."/>
            <person name="Teleman O."/>
            <person name="Stenflo J."/>
            <person name="Drakenberg T."/>
        </authorList>
    </citation>
    <scope>STRUCTURE BY NMR OF 85-126</scope>
</reference>
<reference key="15">
    <citation type="journal article" date="1996" name="Biochemistry">
        <title>The relative orientation of Gla and EGF domains in coagulation factor X is altered by Ca2+ binding to the first EGF domain. A combined NMR-small angle X-ray scattering study.</title>
        <authorList>
            <person name="Sunnerhagen M."/>
            <person name="Olah G.A."/>
            <person name="Stenflo J."/>
            <person name="Forsen S."/>
            <person name="Drakenberg T."/>
            <person name="Trewhella J."/>
        </authorList>
    </citation>
    <scope>STRUCTURE BY NMR OF 41-126</scope>
</reference>
<keyword id="KW-0002">3D-structure</keyword>
<keyword id="KW-0094">Blood coagulation</keyword>
<keyword id="KW-0106">Calcium</keyword>
<keyword id="KW-0165">Cleavage on pair of basic residues</keyword>
<keyword id="KW-0903">Direct protein sequencing</keyword>
<keyword id="KW-1015">Disulfide bond</keyword>
<keyword id="KW-0245">EGF-like domain</keyword>
<keyword id="KW-0301">Gamma-carboxyglutamic acid</keyword>
<keyword id="KW-0325">Glycoprotein</keyword>
<keyword id="KW-0356">Hemostasis</keyword>
<keyword id="KW-0378">Hydrolase</keyword>
<keyword id="KW-0379">Hydroxylation</keyword>
<keyword id="KW-0645">Protease</keyword>
<keyword id="KW-1185">Reference proteome</keyword>
<keyword id="KW-0677">Repeat</keyword>
<keyword id="KW-0964">Secreted</keyword>
<keyword id="KW-0720">Serine protease</keyword>
<keyword id="KW-0732">Signal</keyword>
<keyword id="KW-0765">Sulfation</keyword>
<keyword id="KW-0865">Zymogen</keyword>